<accession>Q48QX1</accession>
<dbReference type="EMBL" id="CP000056">
    <property type="protein sequence ID" value="AAX72889.1"/>
    <property type="molecule type" value="Genomic_DNA"/>
</dbReference>
<dbReference type="RefSeq" id="WP_002982199.1">
    <property type="nucleotide sequence ID" value="NC_007296.2"/>
</dbReference>
<dbReference type="KEGG" id="spb:M28_Spy1779"/>
<dbReference type="HOGENOM" id="CLU_146610_2_1_9"/>
<dbReference type="HAMAP" id="MF_01448">
    <property type="entry name" value="UPF0473"/>
    <property type="match status" value="1"/>
</dbReference>
<dbReference type="InterPro" id="IPR009711">
    <property type="entry name" value="UPF0473"/>
</dbReference>
<dbReference type="NCBIfam" id="NF010215">
    <property type="entry name" value="PRK13678.1-2"/>
    <property type="match status" value="1"/>
</dbReference>
<dbReference type="NCBIfam" id="NF010217">
    <property type="entry name" value="PRK13678.1-4"/>
    <property type="match status" value="1"/>
</dbReference>
<dbReference type="PANTHER" id="PTHR40066">
    <property type="entry name" value="UPF0473 PROTEIN CBO2561/CLC_2432"/>
    <property type="match status" value="1"/>
</dbReference>
<dbReference type="PANTHER" id="PTHR40066:SF1">
    <property type="entry name" value="UPF0473 PROTEIN CBO2561_CLC_2432"/>
    <property type="match status" value="1"/>
</dbReference>
<dbReference type="Pfam" id="PF06949">
    <property type="entry name" value="DUF1292"/>
    <property type="match status" value="1"/>
</dbReference>
<protein>
    <recommendedName>
        <fullName evidence="1">UPF0473 protein M28_Spy1779</fullName>
    </recommendedName>
</protein>
<reference key="1">
    <citation type="journal article" date="2005" name="J. Infect. Dis.">
        <title>Genome sequence of a serotype M28 strain of group A Streptococcus: potential new insights into puerperal sepsis and bacterial disease specificity.</title>
        <authorList>
            <person name="Green N.M."/>
            <person name="Zhang S."/>
            <person name="Porcella S.F."/>
            <person name="Nagiec M.J."/>
            <person name="Barbian K.D."/>
            <person name="Beres S.B."/>
            <person name="Lefebvre R.B."/>
            <person name="Musser J.M."/>
        </authorList>
    </citation>
    <scope>NUCLEOTIDE SEQUENCE [LARGE SCALE GENOMIC DNA]</scope>
    <source>
        <strain>MGAS6180</strain>
    </source>
</reference>
<organism>
    <name type="scientific">Streptococcus pyogenes serotype M28 (strain MGAS6180)</name>
    <dbReference type="NCBI Taxonomy" id="319701"/>
    <lineage>
        <taxon>Bacteria</taxon>
        <taxon>Bacillati</taxon>
        <taxon>Bacillota</taxon>
        <taxon>Bacilli</taxon>
        <taxon>Lactobacillales</taxon>
        <taxon>Streptococcaceae</taxon>
        <taxon>Streptococcus</taxon>
    </lineage>
</organism>
<feature type="chain" id="PRO_0000304864" description="UPF0473 protein M28_Spy1779">
    <location>
        <begin position="1"/>
        <end position="101"/>
    </location>
</feature>
<comment type="similarity">
    <text evidence="1">Belongs to the UPF0473 family.</text>
</comment>
<sequence length="101" mass="11545">MTHNHENDHQHEVITLVDEQGNETLFEILLTIDGREEFGKNYVLLVPAGSEEDESGEIEIQAYSFTENEDGTEGDLQPIPEDSDAEWDMIEEVFNSFLDEN</sequence>
<name>Y1779_STRPM</name>
<gene>
    <name type="ordered locus">M28_Spy1779</name>
</gene>
<proteinExistence type="inferred from homology"/>
<evidence type="ECO:0000255" key="1">
    <source>
        <dbReference type="HAMAP-Rule" id="MF_01448"/>
    </source>
</evidence>